<sequence>MTKKEQALIEQYAKSLVEVASEHHSLDALQADVLAILETFVTTNLDQSLSSQAVPHAEKIKLLTLLKGNNSVYMNNFLNLILQNEREAYLYQMLQAVLNEIAIVSNQYDVTVTSSLPLTEEQKSRVRAVVAKKFAVTAGRLIEKVDPSLIGGFIISVNNKVIDTSIRRQLQAFKMNLK</sequence>
<feature type="chain" id="PRO_0000371157" description="ATP synthase subunit delta">
    <location>
        <begin position="1"/>
        <end position="178"/>
    </location>
</feature>
<name>ATPD_STRP1</name>
<gene>
    <name evidence="1" type="primary">atpH</name>
    <name type="ordered locus">SPy_0757</name>
    <name type="ordered locus">M5005_Spy0578</name>
</gene>
<comment type="function">
    <text evidence="1">F(1)F(0) ATP synthase produces ATP from ADP in the presence of a proton or sodium gradient. F-type ATPases consist of two structural domains, F(1) containing the extramembraneous catalytic core and F(0) containing the membrane proton channel, linked together by a central stalk and a peripheral stalk. During catalysis, ATP synthesis in the catalytic domain of F(1) is coupled via a rotary mechanism of the central stalk subunits to proton translocation.</text>
</comment>
<comment type="function">
    <text evidence="1">This protein is part of the stalk that links CF(0) to CF(1). It either transmits conformational changes from CF(0) to CF(1) or is implicated in proton conduction.</text>
</comment>
<comment type="subunit">
    <text evidence="1">F-type ATPases have 2 components, F(1) - the catalytic core - and F(0) - the membrane proton channel. F(1) has five subunits: alpha(3), beta(3), gamma(1), delta(1), epsilon(1). F(0) has three main subunits: a(1), b(2) and c(10-14). The alpha and beta chains form an alternating ring which encloses part of the gamma chain. F(1) is attached to F(0) by a central stalk formed by the gamma and epsilon chains, while a peripheral stalk is formed by the delta and b chains.</text>
</comment>
<comment type="subcellular location">
    <subcellularLocation>
        <location evidence="1">Cell membrane</location>
        <topology evidence="1">Peripheral membrane protein</topology>
    </subcellularLocation>
</comment>
<comment type="similarity">
    <text evidence="1">Belongs to the ATPase delta chain family.</text>
</comment>
<proteinExistence type="inferred from homology"/>
<organism>
    <name type="scientific">Streptococcus pyogenes serotype M1</name>
    <dbReference type="NCBI Taxonomy" id="301447"/>
    <lineage>
        <taxon>Bacteria</taxon>
        <taxon>Bacillati</taxon>
        <taxon>Bacillota</taxon>
        <taxon>Bacilli</taxon>
        <taxon>Lactobacillales</taxon>
        <taxon>Streptococcaceae</taxon>
        <taxon>Streptococcus</taxon>
    </lineage>
</organism>
<keyword id="KW-0066">ATP synthesis</keyword>
<keyword id="KW-1003">Cell membrane</keyword>
<keyword id="KW-0139">CF(1)</keyword>
<keyword id="KW-0375">Hydrogen ion transport</keyword>
<keyword id="KW-0406">Ion transport</keyword>
<keyword id="KW-0472">Membrane</keyword>
<keyword id="KW-1185">Reference proteome</keyword>
<keyword id="KW-0813">Transport</keyword>
<protein>
    <recommendedName>
        <fullName evidence="1">ATP synthase subunit delta</fullName>
    </recommendedName>
    <alternativeName>
        <fullName evidence="1">ATP synthase F(1) sector subunit delta</fullName>
    </alternativeName>
    <alternativeName>
        <fullName evidence="1">F-type ATPase subunit delta</fullName>
        <shortName evidence="1">F-ATPase subunit delta</shortName>
    </alternativeName>
</protein>
<reference key="1">
    <citation type="journal article" date="2001" name="Proc. Natl. Acad. Sci. U.S.A.">
        <title>Complete genome sequence of an M1 strain of Streptococcus pyogenes.</title>
        <authorList>
            <person name="Ferretti J.J."/>
            <person name="McShan W.M."/>
            <person name="Ajdic D.J."/>
            <person name="Savic D.J."/>
            <person name="Savic G."/>
            <person name="Lyon K."/>
            <person name="Primeaux C."/>
            <person name="Sezate S."/>
            <person name="Suvorov A.N."/>
            <person name="Kenton S."/>
            <person name="Lai H.S."/>
            <person name="Lin S.P."/>
            <person name="Qian Y."/>
            <person name="Jia H.G."/>
            <person name="Najar F.Z."/>
            <person name="Ren Q."/>
            <person name="Zhu H."/>
            <person name="Song L."/>
            <person name="White J."/>
            <person name="Yuan X."/>
            <person name="Clifton S.W."/>
            <person name="Roe B.A."/>
            <person name="McLaughlin R.E."/>
        </authorList>
    </citation>
    <scope>NUCLEOTIDE SEQUENCE [LARGE SCALE GENOMIC DNA]</scope>
    <source>
        <strain>ATCC 700294 / SF370 / Serotype M1</strain>
    </source>
</reference>
<reference key="2">
    <citation type="journal article" date="2005" name="J. Infect. Dis.">
        <title>Evolutionary origin and emergence of a highly successful clone of serotype M1 group A Streptococcus involved multiple horizontal gene transfer events.</title>
        <authorList>
            <person name="Sumby P."/>
            <person name="Porcella S.F."/>
            <person name="Madrigal A.G."/>
            <person name="Barbian K.D."/>
            <person name="Virtaneva K."/>
            <person name="Ricklefs S.M."/>
            <person name="Sturdevant D.E."/>
            <person name="Graham M.R."/>
            <person name="Vuopio-Varkila J."/>
            <person name="Hoe N.P."/>
            <person name="Musser J.M."/>
        </authorList>
    </citation>
    <scope>NUCLEOTIDE SEQUENCE [LARGE SCALE GENOMIC DNA]</scope>
    <source>
        <strain>ATCC BAA-947 / MGAS5005 / Serotype M1</strain>
    </source>
</reference>
<accession>Q9A0J0</accession>
<accession>Q48ZM2</accession>
<evidence type="ECO:0000255" key="1">
    <source>
        <dbReference type="HAMAP-Rule" id="MF_01416"/>
    </source>
</evidence>
<dbReference type="EMBL" id="AE004092">
    <property type="protein sequence ID" value="AAK33700.1"/>
    <property type="molecule type" value="Genomic_DNA"/>
</dbReference>
<dbReference type="EMBL" id="CP000017">
    <property type="protein sequence ID" value="AAZ51196.1"/>
    <property type="molecule type" value="Genomic_DNA"/>
</dbReference>
<dbReference type="RefSeq" id="NP_268979.1">
    <property type="nucleotide sequence ID" value="NC_002737.2"/>
</dbReference>
<dbReference type="SMR" id="Q9A0J0"/>
<dbReference type="PaxDb" id="1314-HKU360_00588"/>
<dbReference type="KEGG" id="spy:SPy_0757"/>
<dbReference type="KEGG" id="spz:M5005_Spy0578"/>
<dbReference type="PATRIC" id="fig|160490.10.peg.645"/>
<dbReference type="HOGENOM" id="CLU_085114_1_2_9"/>
<dbReference type="OMA" id="FPIRINN"/>
<dbReference type="Proteomes" id="UP000000750">
    <property type="component" value="Chromosome"/>
</dbReference>
<dbReference type="GO" id="GO:0005886">
    <property type="term" value="C:plasma membrane"/>
    <property type="evidence" value="ECO:0007669"/>
    <property type="project" value="UniProtKB-SubCell"/>
</dbReference>
<dbReference type="GO" id="GO:0045259">
    <property type="term" value="C:proton-transporting ATP synthase complex"/>
    <property type="evidence" value="ECO:0007669"/>
    <property type="project" value="UniProtKB-KW"/>
</dbReference>
<dbReference type="GO" id="GO:0046933">
    <property type="term" value="F:proton-transporting ATP synthase activity, rotational mechanism"/>
    <property type="evidence" value="ECO:0007669"/>
    <property type="project" value="UniProtKB-UniRule"/>
</dbReference>
<dbReference type="Gene3D" id="1.10.520.20">
    <property type="entry name" value="N-terminal domain of the delta subunit of the F1F0-ATP synthase"/>
    <property type="match status" value="1"/>
</dbReference>
<dbReference type="HAMAP" id="MF_01416">
    <property type="entry name" value="ATP_synth_delta_bact"/>
    <property type="match status" value="1"/>
</dbReference>
<dbReference type="InterPro" id="IPR026015">
    <property type="entry name" value="ATP_synth_OSCP/delta_N_sf"/>
</dbReference>
<dbReference type="InterPro" id="IPR000711">
    <property type="entry name" value="ATPase_OSCP/dsu"/>
</dbReference>
<dbReference type="NCBIfam" id="TIGR01145">
    <property type="entry name" value="ATP_synt_delta"/>
    <property type="match status" value="1"/>
</dbReference>
<dbReference type="NCBIfam" id="NF004401">
    <property type="entry name" value="PRK05758.2-1"/>
    <property type="match status" value="1"/>
</dbReference>
<dbReference type="PANTHER" id="PTHR11910">
    <property type="entry name" value="ATP SYNTHASE DELTA CHAIN"/>
    <property type="match status" value="1"/>
</dbReference>
<dbReference type="Pfam" id="PF00213">
    <property type="entry name" value="OSCP"/>
    <property type="match status" value="1"/>
</dbReference>
<dbReference type="PRINTS" id="PR00125">
    <property type="entry name" value="ATPASEDELTA"/>
</dbReference>
<dbReference type="SUPFAM" id="SSF47928">
    <property type="entry name" value="N-terminal domain of the delta subunit of the F1F0-ATP synthase"/>
    <property type="match status" value="1"/>
</dbReference>